<sequence>MSKDVIEYSKLFAKLVNTNDDTKLDDTIASFLYYMFPRELFIRAISLLESSDMFIYILDRVHNKEGNEHTSLIDVLVDEFYKGSSNSLLEYRLIVKDTNDGAPPILVDIAHWFCSCEEFCKYFHEALEKTDEKEELHDVLINEVDDHLQFSDDRFAQLDPHSLSKQWYFKFDKICCSHLLAFSILLRSSINVLKFFTVNSNKVFVIAIDNIDEWLNLHINIVE</sequence>
<dbReference type="EMBL" id="ADXC01000018">
    <property type="protein sequence ID" value="EGA79557.1"/>
    <property type="molecule type" value="Genomic_DNA"/>
</dbReference>
<dbReference type="SMR" id="E7LSL5"/>
<dbReference type="HOGENOM" id="CLU_1115918_0_0_1"/>
<dbReference type="OMA" id="WLKLHLN"/>
<dbReference type="GO" id="GO:0005634">
    <property type="term" value="C:nucleus"/>
    <property type="evidence" value="ECO:0007669"/>
    <property type="project" value="UniProtKB-SubCell"/>
</dbReference>
<dbReference type="GO" id="GO:0006310">
    <property type="term" value="P:DNA recombination"/>
    <property type="evidence" value="ECO:0007669"/>
    <property type="project" value="UniProtKB-KW"/>
</dbReference>
<dbReference type="GO" id="GO:0006281">
    <property type="term" value="P:DNA repair"/>
    <property type="evidence" value="ECO:0007669"/>
    <property type="project" value="UniProtKB-KW"/>
</dbReference>
<protein>
    <recommendedName>
        <fullName>Suppressor of hydroxyurea sensitivity protein 2</fullName>
    </recommendedName>
</protein>
<gene>
    <name type="primary">SHU2</name>
    <name type="ORF">VIN13_0811</name>
</gene>
<organism>
    <name type="scientific">Saccharomyces cerevisiae (strain VIN 13)</name>
    <name type="common">Baker's yeast</name>
    <dbReference type="NCBI Taxonomy" id="764099"/>
    <lineage>
        <taxon>Eukaryota</taxon>
        <taxon>Fungi</taxon>
        <taxon>Dikarya</taxon>
        <taxon>Ascomycota</taxon>
        <taxon>Saccharomycotina</taxon>
        <taxon>Saccharomycetes</taxon>
        <taxon>Saccharomycetales</taxon>
        <taxon>Saccharomycetaceae</taxon>
        <taxon>Saccharomyces</taxon>
    </lineage>
</organism>
<feature type="chain" id="PRO_0000409745" description="Suppressor of hydroxyurea sensitivity protein 2">
    <location>
        <begin position="1"/>
        <end position="223"/>
    </location>
</feature>
<comment type="function">
    <text evidence="1">Plays a role in a RAD51/RAD54-dependent homologous recombination repair (HRR) pathway to repair MMS-induced lesions during S-phase. Required for error-free repair of spontaneous and induced DNA lesions to protect the genome from mutation (By similarity).</text>
</comment>
<comment type="subunit">
    <text evidence="1">Component of the SHU complex composed of at least CSM2, PSY3, SHU1 and SHU2.</text>
</comment>
<comment type="subcellular location">
    <subcellularLocation>
        <location evidence="1">Nucleus</location>
    </subcellularLocation>
</comment>
<comment type="similarity">
    <text evidence="2">Belongs to the SHU2 family.</text>
</comment>
<name>SHU2_YEASV</name>
<proteinExistence type="inferred from homology"/>
<keyword id="KW-0227">DNA damage</keyword>
<keyword id="KW-0233">DNA recombination</keyword>
<keyword id="KW-0234">DNA repair</keyword>
<keyword id="KW-0539">Nucleus</keyword>
<evidence type="ECO:0000250" key="1"/>
<evidence type="ECO:0000305" key="2"/>
<reference key="1">
    <citation type="journal article" date="2011" name="PLoS Genet.">
        <title>Whole-genome comparison reveals novel genetic elements that characterize the genome of industrial strains of Saccharomyces cerevisiae.</title>
        <authorList>
            <person name="Borneman A.R."/>
            <person name="Desany B.A."/>
            <person name="Riches D."/>
            <person name="Affourtit J.P."/>
            <person name="Forgan A.H."/>
            <person name="Pretorius I.S."/>
            <person name="Egholm M."/>
            <person name="Chambers P.J."/>
        </authorList>
    </citation>
    <scope>NUCLEOTIDE SEQUENCE [LARGE SCALE GENOMIC DNA]</scope>
    <source>
        <strain>VIN 13</strain>
    </source>
</reference>
<accession>E7LSL5</accession>